<sequence>MKRQGASSERKRARIPSGKAGAANGFLMEVCVDSVESAVNAERGGADRIELCSGLSEGGTTPSMGVLQVVKQSVQIPVFVMIRPRGGDFLYSDREIEVMKADIRLAKLYGADGLVFGALTEDGHIDKELCMSLMAICRPLPVTFHRAFDMVHDPMAALETLLTLGFERVLTSGCDSSALEGLPLIKRLIEQAKGRIVVMPGGGITDRNLQRILEGSGATEFHCSARSTRDSGMKFRNSSVAMGASLSCSEYSLKVTDVTKVRTLNAIAKNILV</sequence>
<reference key="1">
    <citation type="journal article" date="2000" name="Genome Res.">
        <title>Identification of novel human genes evolutionarily conserved in Caenorhabditis elegans by comparative proteomics.</title>
        <authorList>
            <person name="Lai C.-H."/>
            <person name="Chou C.-Y."/>
            <person name="Ch'ang L.-Y."/>
            <person name="Liu C.-S."/>
            <person name="Lin W.-C."/>
        </authorList>
    </citation>
    <scope>NUCLEOTIDE SEQUENCE [LARGE SCALE MRNA]</scope>
</reference>
<reference key="2">
    <citation type="journal article" date="2004" name="Nat. Genet.">
        <title>Complete sequencing and characterization of 21,243 full-length human cDNAs.</title>
        <authorList>
            <person name="Ota T."/>
            <person name="Suzuki Y."/>
            <person name="Nishikawa T."/>
            <person name="Otsuki T."/>
            <person name="Sugiyama T."/>
            <person name="Irie R."/>
            <person name="Wakamatsu A."/>
            <person name="Hayashi K."/>
            <person name="Sato H."/>
            <person name="Nagai K."/>
            <person name="Kimura K."/>
            <person name="Makita H."/>
            <person name="Sekine M."/>
            <person name="Obayashi M."/>
            <person name="Nishi T."/>
            <person name="Shibahara T."/>
            <person name="Tanaka T."/>
            <person name="Ishii S."/>
            <person name="Yamamoto J."/>
            <person name="Saito K."/>
            <person name="Kawai Y."/>
            <person name="Isono Y."/>
            <person name="Nakamura Y."/>
            <person name="Nagahari K."/>
            <person name="Murakami K."/>
            <person name="Yasuda T."/>
            <person name="Iwayanagi T."/>
            <person name="Wagatsuma M."/>
            <person name="Shiratori A."/>
            <person name="Sudo H."/>
            <person name="Hosoiri T."/>
            <person name="Kaku Y."/>
            <person name="Kodaira H."/>
            <person name="Kondo H."/>
            <person name="Sugawara M."/>
            <person name="Takahashi M."/>
            <person name="Kanda K."/>
            <person name="Yokoi T."/>
            <person name="Furuya T."/>
            <person name="Kikkawa E."/>
            <person name="Omura Y."/>
            <person name="Abe K."/>
            <person name="Kamihara K."/>
            <person name="Katsuta N."/>
            <person name="Sato K."/>
            <person name="Tanikawa M."/>
            <person name="Yamazaki M."/>
            <person name="Ninomiya K."/>
            <person name="Ishibashi T."/>
            <person name="Yamashita H."/>
            <person name="Murakawa K."/>
            <person name="Fujimori K."/>
            <person name="Tanai H."/>
            <person name="Kimata M."/>
            <person name="Watanabe M."/>
            <person name="Hiraoka S."/>
            <person name="Chiba Y."/>
            <person name="Ishida S."/>
            <person name="Ono Y."/>
            <person name="Takiguchi S."/>
            <person name="Watanabe S."/>
            <person name="Yosida M."/>
            <person name="Hotuta T."/>
            <person name="Kusano J."/>
            <person name="Kanehori K."/>
            <person name="Takahashi-Fujii A."/>
            <person name="Hara H."/>
            <person name="Tanase T.-O."/>
            <person name="Nomura Y."/>
            <person name="Togiya S."/>
            <person name="Komai F."/>
            <person name="Hara R."/>
            <person name="Takeuchi K."/>
            <person name="Arita M."/>
            <person name="Imose N."/>
            <person name="Musashino K."/>
            <person name="Yuuki H."/>
            <person name="Oshima A."/>
            <person name="Sasaki N."/>
            <person name="Aotsuka S."/>
            <person name="Yoshikawa Y."/>
            <person name="Matsunawa H."/>
            <person name="Ichihara T."/>
            <person name="Shiohata N."/>
            <person name="Sano S."/>
            <person name="Moriya S."/>
            <person name="Momiyama H."/>
            <person name="Satoh N."/>
            <person name="Takami S."/>
            <person name="Terashima Y."/>
            <person name="Suzuki O."/>
            <person name="Nakagawa S."/>
            <person name="Senoh A."/>
            <person name="Mizoguchi H."/>
            <person name="Goto Y."/>
            <person name="Shimizu F."/>
            <person name="Wakebe H."/>
            <person name="Hishigaki H."/>
            <person name="Watanabe T."/>
            <person name="Sugiyama A."/>
            <person name="Takemoto M."/>
            <person name="Kawakami B."/>
            <person name="Yamazaki M."/>
            <person name="Watanabe K."/>
            <person name="Kumagai A."/>
            <person name="Itakura S."/>
            <person name="Fukuzumi Y."/>
            <person name="Fujimori Y."/>
            <person name="Komiyama M."/>
            <person name="Tashiro H."/>
            <person name="Tanigami A."/>
            <person name="Fujiwara T."/>
            <person name="Ono T."/>
            <person name="Yamada K."/>
            <person name="Fujii Y."/>
            <person name="Ozaki K."/>
            <person name="Hirao M."/>
            <person name="Ohmori Y."/>
            <person name="Kawabata A."/>
            <person name="Hikiji T."/>
            <person name="Kobatake N."/>
            <person name="Inagaki H."/>
            <person name="Ikema Y."/>
            <person name="Okamoto S."/>
            <person name="Okitani R."/>
            <person name="Kawakami T."/>
            <person name="Noguchi S."/>
            <person name="Itoh T."/>
            <person name="Shigeta K."/>
            <person name="Senba T."/>
            <person name="Matsumura K."/>
            <person name="Nakajima Y."/>
            <person name="Mizuno T."/>
            <person name="Morinaga M."/>
            <person name="Sasaki M."/>
            <person name="Togashi T."/>
            <person name="Oyama M."/>
            <person name="Hata H."/>
            <person name="Watanabe M."/>
            <person name="Komatsu T."/>
            <person name="Mizushima-Sugano J."/>
            <person name="Satoh T."/>
            <person name="Shirai Y."/>
            <person name="Takahashi Y."/>
            <person name="Nakagawa K."/>
            <person name="Okumura K."/>
            <person name="Nagase T."/>
            <person name="Nomura N."/>
            <person name="Kikuchi H."/>
            <person name="Masuho Y."/>
            <person name="Yamashita R."/>
            <person name="Nakai K."/>
            <person name="Yada T."/>
            <person name="Nakamura Y."/>
            <person name="Ohara O."/>
            <person name="Isogai T."/>
            <person name="Sugano S."/>
        </authorList>
    </citation>
    <scope>NUCLEOTIDE SEQUENCE [LARGE SCALE MRNA]</scope>
    <source>
        <tissue>Skeletal muscle</tissue>
    </source>
</reference>
<reference key="3">
    <citation type="journal article" date="2004" name="Nature">
        <title>The DNA sequence and comparative analysis of human chromosome 10.</title>
        <authorList>
            <person name="Deloukas P."/>
            <person name="Earthrowl M.E."/>
            <person name="Grafham D.V."/>
            <person name="Rubenfield M."/>
            <person name="French L."/>
            <person name="Steward C.A."/>
            <person name="Sims S.K."/>
            <person name="Jones M.C."/>
            <person name="Searle S."/>
            <person name="Scott C."/>
            <person name="Howe K."/>
            <person name="Hunt S.E."/>
            <person name="Andrews T.D."/>
            <person name="Gilbert J.G.R."/>
            <person name="Swarbreck D."/>
            <person name="Ashurst J.L."/>
            <person name="Taylor A."/>
            <person name="Battles J."/>
            <person name="Bird C.P."/>
            <person name="Ainscough R."/>
            <person name="Almeida J.P."/>
            <person name="Ashwell R.I.S."/>
            <person name="Ambrose K.D."/>
            <person name="Babbage A.K."/>
            <person name="Bagguley C.L."/>
            <person name="Bailey J."/>
            <person name="Banerjee R."/>
            <person name="Bates K."/>
            <person name="Beasley H."/>
            <person name="Bray-Allen S."/>
            <person name="Brown A.J."/>
            <person name="Brown J.Y."/>
            <person name="Burford D.C."/>
            <person name="Burrill W."/>
            <person name="Burton J."/>
            <person name="Cahill P."/>
            <person name="Camire D."/>
            <person name="Carter N.P."/>
            <person name="Chapman J.C."/>
            <person name="Clark S.Y."/>
            <person name="Clarke G."/>
            <person name="Clee C.M."/>
            <person name="Clegg S."/>
            <person name="Corby N."/>
            <person name="Coulson A."/>
            <person name="Dhami P."/>
            <person name="Dutta I."/>
            <person name="Dunn M."/>
            <person name="Faulkner L."/>
            <person name="Frankish A."/>
            <person name="Frankland J.A."/>
            <person name="Garner P."/>
            <person name="Garnett J."/>
            <person name="Gribble S."/>
            <person name="Griffiths C."/>
            <person name="Grocock R."/>
            <person name="Gustafson E."/>
            <person name="Hammond S."/>
            <person name="Harley J.L."/>
            <person name="Hart E."/>
            <person name="Heath P.D."/>
            <person name="Ho T.P."/>
            <person name="Hopkins B."/>
            <person name="Horne J."/>
            <person name="Howden P.J."/>
            <person name="Huckle E."/>
            <person name="Hynds C."/>
            <person name="Johnson C."/>
            <person name="Johnson D."/>
            <person name="Kana A."/>
            <person name="Kay M."/>
            <person name="Kimberley A.M."/>
            <person name="Kershaw J.K."/>
            <person name="Kokkinaki M."/>
            <person name="Laird G.K."/>
            <person name="Lawlor S."/>
            <person name="Lee H.M."/>
            <person name="Leongamornlert D.A."/>
            <person name="Laird G."/>
            <person name="Lloyd C."/>
            <person name="Lloyd D.M."/>
            <person name="Loveland J."/>
            <person name="Lovell J."/>
            <person name="McLaren S."/>
            <person name="McLay K.E."/>
            <person name="McMurray A."/>
            <person name="Mashreghi-Mohammadi M."/>
            <person name="Matthews L."/>
            <person name="Milne S."/>
            <person name="Nickerson T."/>
            <person name="Nguyen M."/>
            <person name="Overton-Larty E."/>
            <person name="Palmer S.A."/>
            <person name="Pearce A.V."/>
            <person name="Peck A.I."/>
            <person name="Pelan S."/>
            <person name="Phillimore B."/>
            <person name="Porter K."/>
            <person name="Rice C.M."/>
            <person name="Rogosin A."/>
            <person name="Ross M.T."/>
            <person name="Sarafidou T."/>
            <person name="Sehra H.K."/>
            <person name="Shownkeen R."/>
            <person name="Skuce C.D."/>
            <person name="Smith M."/>
            <person name="Standring L."/>
            <person name="Sycamore N."/>
            <person name="Tester J."/>
            <person name="Thorpe A."/>
            <person name="Torcasso W."/>
            <person name="Tracey A."/>
            <person name="Tromans A."/>
            <person name="Tsolas J."/>
            <person name="Wall M."/>
            <person name="Walsh J."/>
            <person name="Wang H."/>
            <person name="Weinstock K."/>
            <person name="West A.P."/>
            <person name="Willey D.L."/>
            <person name="Whitehead S.L."/>
            <person name="Wilming L."/>
            <person name="Wray P.W."/>
            <person name="Young L."/>
            <person name="Chen Y."/>
            <person name="Lovering R.C."/>
            <person name="Moschonas N.K."/>
            <person name="Siebert R."/>
            <person name="Fechtel K."/>
            <person name="Bentley D."/>
            <person name="Durbin R.M."/>
            <person name="Hubbard T."/>
            <person name="Doucette-Stamm L."/>
            <person name="Beck S."/>
            <person name="Smith D.R."/>
            <person name="Rogers J."/>
        </authorList>
    </citation>
    <scope>NUCLEOTIDE SEQUENCE [LARGE SCALE GENOMIC DNA]</scope>
</reference>
<reference key="4">
    <citation type="submission" date="2005-09" db="EMBL/GenBank/DDBJ databases">
        <authorList>
            <person name="Mural R.J."/>
            <person name="Istrail S."/>
            <person name="Sutton G.G."/>
            <person name="Florea L."/>
            <person name="Halpern A.L."/>
            <person name="Mobarry C.M."/>
            <person name="Lippert R."/>
            <person name="Walenz B."/>
            <person name="Shatkay H."/>
            <person name="Dew I."/>
            <person name="Miller J.R."/>
            <person name="Flanigan M.J."/>
            <person name="Edwards N.J."/>
            <person name="Bolanos R."/>
            <person name="Fasulo D."/>
            <person name="Halldorsson B.V."/>
            <person name="Hannenhalli S."/>
            <person name="Turner R."/>
            <person name="Yooseph S."/>
            <person name="Lu F."/>
            <person name="Nusskern D.R."/>
            <person name="Shue B.C."/>
            <person name="Zheng X.H."/>
            <person name="Zhong F."/>
            <person name="Delcher A.L."/>
            <person name="Huson D.H."/>
            <person name="Kravitz S.A."/>
            <person name="Mouchard L."/>
            <person name="Reinert K."/>
            <person name="Remington K.A."/>
            <person name="Clark A.G."/>
            <person name="Waterman M.S."/>
            <person name="Eichler E.E."/>
            <person name="Adams M.D."/>
            <person name="Hunkapiller M.W."/>
            <person name="Myers E.W."/>
            <person name="Venter J.C."/>
        </authorList>
    </citation>
    <scope>NUCLEOTIDE SEQUENCE [LARGE SCALE GENOMIC DNA]</scope>
</reference>
<reference key="5">
    <citation type="journal article" date="2004" name="Genome Res.">
        <title>The status, quality, and expansion of the NIH full-length cDNA project: the Mammalian Gene Collection (MGC).</title>
        <authorList>
            <consortium name="The MGC Project Team"/>
        </authorList>
    </citation>
    <scope>NUCLEOTIDE SEQUENCE [LARGE SCALE MRNA]</scope>
    <source>
        <tissue>Lung</tissue>
        <tissue>Skin</tissue>
    </source>
</reference>
<reference key="6">
    <citation type="journal article" date="2005" name="Biochem. Biophys. Res. Commun.">
        <title>Identification and characterization of a novel Cut family cDNA that encodes human copper transporter protein CutC.</title>
        <authorList>
            <person name="Li J."/>
            <person name="Ji C."/>
            <person name="Chen J."/>
            <person name="Yang Z."/>
            <person name="Wang Y."/>
            <person name="Fei X."/>
            <person name="Zheng M."/>
            <person name="Gu X."/>
            <person name="Wen G."/>
            <person name="Xie Y."/>
            <person name="Mao Y."/>
        </authorList>
    </citation>
    <scope>FUNCTION</scope>
    <scope>SUBCELLULAR LOCATION</scope>
    <scope>TISSUE SPECIFICITY</scope>
</reference>
<reference key="7">
    <citation type="journal article" date="2011" name="BMC Syst. Biol.">
        <title>Initial characterization of the human central proteome.</title>
        <authorList>
            <person name="Burkard T.R."/>
            <person name="Planyavsky M."/>
            <person name="Kaupe I."/>
            <person name="Breitwieser F.P."/>
            <person name="Buerckstuemmer T."/>
            <person name="Bennett K.L."/>
            <person name="Superti-Furga G."/>
            <person name="Colinge J."/>
        </authorList>
    </citation>
    <scope>IDENTIFICATION BY MASS SPECTROMETRY [LARGE SCALE ANALYSIS]</scope>
</reference>
<reference key="8">
    <citation type="journal article" date="2010" name="J. Struct. Biol.">
        <title>Crystal structure of human copper homeostasis protein CutC reveals a potential copper-binding site.</title>
        <authorList>
            <person name="Li Y."/>
            <person name="Du J."/>
            <person name="Zhang P."/>
            <person name="Ding J."/>
        </authorList>
    </citation>
    <scope>X-RAY CRYSTALLOGRAPHY (2.5 ANGSTROMS)</scope>
    <scope>COPPER-BINDING</scope>
    <scope>FUNCTION</scope>
    <scope>SUBUNIT</scope>
    <scope>MUTAGENESIS OF CYS-31 AND CYS-52</scope>
</reference>
<reference key="9">
    <citation type="journal article" date="2006" name="Science">
        <title>The consensus coding sequences of human breast and colorectal cancers.</title>
        <authorList>
            <person name="Sjoeblom T."/>
            <person name="Jones S."/>
            <person name="Wood L.D."/>
            <person name="Parsons D.W."/>
            <person name="Lin J."/>
            <person name="Barber T.D."/>
            <person name="Mandelker D."/>
            <person name="Leary R.J."/>
            <person name="Ptak J."/>
            <person name="Silliman N."/>
            <person name="Szabo S."/>
            <person name="Buckhaults P."/>
            <person name="Farrell C."/>
            <person name="Meeh P."/>
            <person name="Markowitz S.D."/>
            <person name="Willis J."/>
            <person name="Dawson D."/>
            <person name="Willson J.K.V."/>
            <person name="Gazdar A.F."/>
            <person name="Hartigan J."/>
            <person name="Wu L."/>
            <person name="Liu C."/>
            <person name="Parmigiani G."/>
            <person name="Park B.H."/>
            <person name="Bachman K.E."/>
            <person name="Papadopoulos N."/>
            <person name="Vogelstein B."/>
            <person name="Kinzler K.W."/>
            <person name="Velculescu V.E."/>
        </authorList>
    </citation>
    <scope>VARIANT [LARGE SCALE ANALYSIS] LEU-77</scope>
</reference>
<evidence type="ECO:0000269" key="1">
    <source>
    </source>
</evidence>
<evidence type="ECO:0000269" key="2">
    <source>
    </source>
</evidence>
<evidence type="ECO:0000269" key="3">
    <source>
    </source>
</evidence>
<evidence type="ECO:0000305" key="4"/>
<evidence type="ECO:0007829" key="5">
    <source>
        <dbReference type="PDB" id="3IWP"/>
    </source>
</evidence>
<proteinExistence type="evidence at protein level"/>
<organism>
    <name type="scientific">Homo sapiens</name>
    <name type="common">Human</name>
    <dbReference type="NCBI Taxonomy" id="9606"/>
    <lineage>
        <taxon>Eukaryota</taxon>
        <taxon>Metazoa</taxon>
        <taxon>Chordata</taxon>
        <taxon>Craniata</taxon>
        <taxon>Vertebrata</taxon>
        <taxon>Euteleostomi</taxon>
        <taxon>Mammalia</taxon>
        <taxon>Eutheria</taxon>
        <taxon>Euarchontoglires</taxon>
        <taxon>Primates</taxon>
        <taxon>Haplorrhini</taxon>
        <taxon>Catarrhini</taxon>
        <taxon>Hominidae</taxon>
        <taxon>Homo</taxon>
    </lineage>
</organism>
<comment type="function">
    <text evidence="1 3">May play a role in copper homeostasis. Can bind one Cu(1+) per subunit.</text>
</comment>
<comment type="subunit">
    <text evidence="3">Homotetramer.</text>
</comment>
<comment type="interaction">
    <interactant intactId="EBI-714918">
        <id>Q9NTM9</id>
    </interactant>
    <interactant intactId="EBI-930964">
        <id>P54253</id>
        <label>ATXN1</label>
    </interactant>
    <organismsDiffer>false</organismsDiffer>
    <experiments>3</experiments>
</comment>
<comment type="interaction">
    <interactant intactId="EBI-714918">
        <id>Q9NTM9</id>
    </interactant>
    <interactant intactId="EBI-765407">
        <id>P41182</id>
        <label>BCL6</label>
    </interactant>
    <organismsDiffer>false</organismsDiffer>
    <experiments>3</experiments>
</comment>
<comment type="interaction">
    <interactant intactId="EBI-714918">
        <id>Q9NTM9</id>
    </interactant>
    <interactant intactId="EBI-295634">
        <id>Q16543</id>
        <label>CDC37</label>
    </interactant>
    <organismsDiffer>false</organismsDiffer>
    <experiments>3</experiments>
</comment>
<comment type="interaction">
    <interactant intactId="EBI-714918">
        <id>Q9NTM9</id>
    </interactant>
    <interactant intactId="EBI-742887">
        <id>Q8TAP6</id>
        <label>CEP76</label>
    </interactant>
    <organismsDiffer>false</organismsDiffer>
    <experiments>3</experiments>
</comment>
<comment type="interaction">
    <interactant intactId="EBI-714918">
        <id>Q9NTM9</id>
    </interactant>
    <interactant intactId="EBI-2556193">
        <id>Q63ZY3</id>
        <label>KANK2</label>
    </interactant>
    <organismsDiffer>false</organismsDiffer>
    <experiments>3</experiments>
</comment>
<comment type="interaction">
    <interactant intactId="EBI-714918">
        <id>Q9NTM9</id>
    </interactant>
    <interactant intactId="EBI-16439278">
        <id>Q6FHY5</id>
        <label>MEOX2</label>
    </interactant>
    <organismsDiffer>false</organismsDiffer>
    <experiments>3</experiments>
</comment>
<comment type="interaction">
    <interactant intactId="EBI-714918">
        <id>Q9NTM9</id>
    </interactant>
    <interactant intactId="EBI-6165891">
        <id>Q14696</id>
        <label>MESD</label>
    </interactant>
    <organismsDiffer>false</organismsDiffer>
    <experiments>3</experiments>
</comment>
<comment type="interaction">
    <interactant intactId="EBI-714918">
        <id>Q9NTM9</id>
    </interactant>
    <interactant intactId="EBI-748610">
        <id>Q6IA69</id>
        <label>NADSYN1</label>
    </interactant>
    <organismsDiffer>false</organismsDiffer>
    <experiments>4</experiments>
</comment>
<comment type="interaction">
    <interactant intactId="EBI-714918">
        <id>Q9NTM9</id>
    </interactant>
    <interactant intactId="EBI-741158">
        <id>Q96HA8</id>
        <label>NTAQ1</label>
    </interactant>
    <organismsDiffer>false</organismsDiffer>
    <experiments>3</experiments>
</comment>
<comment type="interaction">
    <interactant intactId="EBI-714918">
        <id>Q9NTM9</id>
    </interactant>
    <interactant intactId="EBI-79165">
        <id>Q9NRD5</id>
        <label>PICK1</label>
    </interactant>
    <organismsDiffer>false</organismsDiffer>
    <experiments>3</experiments>
</comment>
<comment type="interaction">
    <interactant intactId="EBI-714918">
        <id>Q9NTM9</id>
    </interactant>
    <interactant intactId="EBI-727004">
        <id>O00560</id>
        <label>SDCBP</label>
    </interactant>
    <organismsDiffer>false</organismsDiffer>
    <experiments>6</experiments>
</comment>
<comment type="interaction">
    <interactant intactId="EBI-714918">
        <id>Q9NTM9</id>
    </interactant>
    <interactant intactId="EBI-742688">
        <id>Q9NZD8</id>
        <label>SPG21</label>
    </interactant>
    <organismsDiffer>false</organismsDiffer>
    <experiments>8</experiments>
</comment>
<comment type="interaction">
    <interactant intactId="EBI-714918">
        <id>Q9NTM9</id>
    </interactant>
    <interactant intactId="EBI-286668">
        <id>Q9UIA9</id>
        <label>XPO7</label>
    </interactant>
    <organismsDiffer>false</organismsDiffer>
    <experiments>2</experiments>
</comment>
<comment type="subcellular location">
    <subcellularLocation>
        <location evidence="1">Cytoplasm</location>
    </subcellularLocation>
    <subcellularLocation>
        <location evidence="1">Nucleus</location>
    </subcellularLocation>
    <text>The overexpressed protein is detected in the cytoplasm, and depending on the cell line, also in the nucleus.</text>
</comment>
<comment type="tissue specificity">
    <text evidence="1">Ubiquitous.</text>
</comment>
<comment type="similarity">
    <text evidence="4">Belongs to the CutC family.</text>
</comment>
<accession>Q9NTM9</accession>
<accession>Q5TCZ8</accession>
<accession>Q9Y321</accession>
<keyword id="KW-0002">3D-structure</keyword>
<keyword id="KW-0186">Copper</keyword>
<keyword id="KW-0963">Cytoplasm</keyword>
<keyword id="KW-0479">Metal-binding</keyword>
<keyword id="KW-0539">Nucleus</keyword>
<keyword id="KW-1267">Proteomics identification</keyword>
<keyword id="KW-1185">Reference proteome</keyword>
<protein>
    <recommendedName>
        <fullName>Copper homeostasis protein cutC homolog</fullName>
    </recommendedName>
</protein>
<feature type="chain" id="PRO_0000215088" description="Copper homeostasis protein cutC homolog">
    <location>
        <begin position="1"/>
        <end position="273"/>
    </location>
</feature>
<feature type="sequence variant" id="VAR_036363" description="In a breast cancer sample; somatic mutation." evidence="2">
    <original>P</original>
    <variation>L</variation>
    <location>
        <position position="77"/>
    </location>
</feature>
<feature type="mutagenesis site" description="Reduces copper binding. Reduces copper binding by 75%; when associated with A-52." evidence="3">
    <original>C</original>
    <variation>A</variation>
    <location>
        <position position="31"/>
    </location>
</feature>
<feature type="mutagenesis site" description="Reduces copper binding. Reduces copper binding by 75%; when associated with A-31." evidence="3">
    <original>C</original>
    <variation>A</variation>
    <location>
        <position position="52"/>
    </location>
</feature>
<feature type="sequence conflict" description="In Ref. 1; AAD27741." evidence="4" ref="1">
    <original>L</original>
    <variation>P</variation>
    <location>
        <position position="108"/>
    </location>
</feature>
<feature type="sequence conflict" description="In Ref. 1; AAD27741." evidence="4" ref="1">
    <original>K</original>
    <variation>N</variation>
    <location>
        <position position="186"/>
    </location>
</feature>
<feature type="strand" evidence="5">
    <location>
        <begin position="26"/>
        <end position="34"/>
    </location>
</feature>
<feature type="helix" evidence="5">
    <location>
        <begin position="35"/>
        <end position="44"/>
    </location>
</feature>
<feature type="strand" evidence="5">
    <location>
        <begin position="47"/>
        <end position="51"/>
    </location>
</feature>
<feature type="helix" evidence="5">
    <location>
        <begin position="55"/>
        <end position="57"/>
    </location>
</feature>
<feature type="helix" evidence="5">
    <location>
        <begin position="64"/>
        <end position="71"/>
    </location>
</feature>
<feature type="strand" evidence="5">
    <location>
        <begin position="78"/>
        <end position="81"/>
    </location>
</feature>
<feature type="strand" evidence="5">
    <location>
        <begin position="84"/>
        <end position="87"/>
    </location>
</feature>
<feature type="helix" evidence="5">
    <location>
        <begin position="93"/>
        <end position="108"/>
    </location>
</feature>
<feature type="strand" evidence="5">
    <location>
        <begin position="112"/>
        <end position="116"/>
    </location>
</feature>
<feature type="helix" evidence="5">
    <location>
        <begin position="127"/>
        <end position="137"/>
    </location>
</feature>
<feature type="strand" evidence="5">
    <location>
        <begin position="142"/>
        <end position="144"/>
    </location>
</feature>
<feature type="helix" evidence="5">
    <location>
        <begin position="146"/>
        <end position="150"/>
    </location>
</feature>
<feature type="helix" evidence="5">
    <location>
        <begin position="154"/>
        <end position="164"/>
    </location>
</feature>
<feature type="strand" evidence="5">
    <location>
        <begin position="167"/>
        <end position="171"/>
    </location>
</feature>
<feature type="strand" evidence="5">
    <location>
        <begin position="175"/>
        <end position="177"/>
    </location>
</feature>
<feature type="turn" evidence="5">
    <location>
        <begin position="178"/>
        <end position="181"/>
    </location>
</feature>
<feature type="helix" evidence="5">
    <location>
        <begin position="182"/>
        <end position="192"/>
    </location>
</feature>
<feature type="strand" evidence="5">
    <location>
        <begin position="195"/>
        <end position="200"/>
    </location>
</feature>
<feature type="turn" evidence="5">
    <location>
        <begin position="206"/>
        <end position="208"/>
    </location>
</feature>
<feature type="helix" evidence="5">
    <location>
        <begin position="209"/>
        <end position="216"/>
    </location>
</feature>
<feature type="strand" evidence="5">
    <location>
        <begin position="219"/>
        <end position="223"/>
    </location>
</feature>
<feature type="strand" evidence="5">
    <location>
        <begin position="226"/>
        <end position="229"/>
    </location>
</feature>
<feature type="turn" evidence="5">
    <location>
        <begin position="244"/>
        <end position="246"/>
    </location>
</feature>
<feature type="strand" evidence="5">
    <location>
        <begin position="253"/>
        <end position="256"/>
    </location>
</feature>
<feature type="helix" evidence="5">
    <location>
        <begin position="258"/>
        <end position="271"/>
    </location>
</feature>
<name>CUTC_HUMAN</name>
<gene>
    <name type="primary">CUTC</name>
    <name type="ORF">CGI-32</name>
</gene>
<dbReference type="EMBL" id="AF132966">
    <property type="protein sequence ID" value="AAD27741.1"/>
    <property type="molecule type" value="mRNA"/>
</dbReference>
<dbReference type="EMBL" id="AK314687">
    <property type="protein sequence ID" value="BAG37239.1"/>
    <property type="molecule type" value="mRNA"/>
</dbReference>
<dbReference type="EMBL" id="AL133353">
    <property type="status" value="NOT_ANNOTATED_CDS"/>
    <property type="molecule type" value="Genomic_DNA"/>
</dbReference>
<dbReference type="EMBL" id="CH471066">
    <property type="protein sequence ID" value="EAW49854.1"/>
    <property type="molecule type" value="Genomic_DNA"/>
</dbReference>
<dbReference type="EMBL" id="BC021105">
    <property type="protein sequence ID" value="AAH21105.1"/>
    <property type="molecule type" value="mRNA"/>
</dbReference>
<dbReference type="EMBL" id="BC028948">
    <property type="protein sequence ID" value="AAH28948.1"/>
    <property type="molecule type" value="mRNA"/>
</dbReference>
<dbReference type="CCDS" id="CCDS7483.1"/>
<dbReference type="RefSeq" id="NP_057044.2">
    <property type="nucleotide sequence ID" value="NM_015960.3"/>
</dbReference>
<dbReference type="PDB" id="3IWP">
    <property type="method" value="X-ray"/>
    <property type="resolution" value="2.50 A"/>
    <property type="chains" value="A/B/C/D/E/F/G/H/I/J/K/L=1-273"/>
</dbReference>
<dbReference type="PDBsum" id="3IWP"/>
<dbReference type="SMR" id="Q9NTM9"/>
<dbReference type="BioGRID" id="119267">
    <property type="interactions" value="37"/>
</dbReference>
<dbReference type="FunCoup" id="Q9NTM9">
    <property type="interactions" value="1782"/>
</dbReference>
<dbReference type="IntAct" id="Q9NTM9">
    <property type="interactions" value="22"/>
</dbReference>
<dbReference type="MINT" id="Q9NTM9"/>
<dbReference type="STRING" id="9606.ENSP00000359507"/>
<dbReference type="TCDB" id="9.B.158.1.1">
    <property type="family name" value="the cut copper homeostasis (cut) family"/>
</dbReference>
<dbReference type="GlyGen" id="Q9NTM9">
    <property type="glycosylation" value="2 sites, 1 O-linked glycan (2 sites)"/>
</dbReference>
<dbReference type="iPTMnet" id="Q9NTM9"/>
<dbReference type="PhosphoSitePlus" id="Q9NTM9"/>
<dbReference type="BioMuta" id="CUTC"/>
<dbReference type="DMDM" id="54035909"/>
<dbReference type="jPOST" id="Q9NTM9"/>
<dbReference type="MassIVE" id="Q9NTM9"/>
<dbReference type="PaxDb" id="9606-ENSP00000359507"/>
<dbReference type="PeptideAtlas" id="Q9NTM9"/>
<dbReference type="ProteomicsDB" id="82625"/>
<dbReference type="Pumba" id="Q9NTM9"/>
<dbReference type="Antibodypedia" id="31094">
    <property type="antibodies" value="189 antibodies from 22 providers"/>
</dbReference>
<dbReference type="DNASU" id="51076"/>
<dbReference type="Ensembl" id="ENST00000370476.10">
    <property type="protein sequence ID" value="ENSP00000359507.5"/>
    <property type="gene ID" value="ENSG00000119929.13"/>
</dbReference>
<dbReference type="GeneID" id="51076"/>
<dbReference type="KEGG" id="hsa:51076"/>
<dbReference type="MANE-Select" id="ENST00000370476.10">
    <property type="protein sequence ID" value="ENSP00000359507.5"/>
    <property type="RefSeq nucleotide sequence ID" value="NM_015960.3"/>
    <property type="RefSeq protein sequence ID" value="NP_057044.2"/>
</dbReference>
<dbReference type="UCSC" id="uc001kqd.5">
    <property type="organism name" value="human"/>
</dbReference>
<dbReference type="AGR" id="HGNC:24271"/>
<dbReference type="CTD" id="51076"/>
<dbReference type="DisGeNET" id="51076"/>
<dbReference type="GeneCards" id="CUTC"/>
<dbReference type="HGNC" id="HGNC:24271">
    <property type="gene designation" value="CUTC"/>
</dbReference>
<dbReference type="HPA" id="ENSG00000119929">
    <property type="expression patterns" value="Group enriched (skeletal muscle, tongue)"/>
</dbReference>
<dbReference type="MIM" id="610101">
    <property type="type" value="gene"/>
</dbReference>
<dbReference type="neXtProt" id="NX_Q9NTM9"/>
<dbReference type="OpenTargets" id="ENSG00000119929"/>
<dbReference type="PharmGKB" id="PA134901980"/>
<dbReference type="VEuPathDB" id="HostDB:ENSG00000119929"/>
<dbReference type="eggNOG" id="KOG4013">
    <property type="taxonomic scope" value="Eukaryota"/>
</dbReference>
<dbReference type="GeneTree" id="ENSGT00390000008454"/>
<dbReference type="InParanoid" id="Q9NTM9"/>
<dbReference type="OMA" id="HRAFDQC"/>
<dbReference type="OrthoDB" id="7392499at2759"/>
<dbReference type="PAN-GO" id="Q9NTM9">
    <property type="GO annotations" value="1 GO annotation based on evolutionary models"/>
</dbReference>
<dbReference type="PhylomeDB" id="Q9NTM9"/>
<dbReference type="TreeFam" id="TF105937"/>
<dbReference type="PathwayCommons" id="Q9NTM9"/>
<dbReference type="Reactome" id="R-HSA-936837">
    <property type="pathway name" value="Ion transport by P-type ATPases"/>
</dbReference>
<dbReference type="SignaLink" id="Q9NTM9"/>
<dbReference type="BioGRID-ORCS" id="51076">
    <property type="hits" value="9 hits in 1156 CRISPR screens"/>
</dbReference>
<dbReference type="CD-CODE" id="91857CE7">
    <property type="entry name" value="Nucleolus"/>
</dbReference>
<dbReference type="ChiTaRS" id="CUTC">
    <property type="organism name" value="human"/>
</dbReference>
<dbReference type="EvolutionaryTrace" id="Q9NTM9"/>
<dbReference type="GeneWiki" id="CUTC_(gene)"/>
<dbReference type="GenomeRNAi" id="51076"/>
<dbReference type="Pharos" id="Q9NTM9">
    <property type="development level" value="Tbio"/>
</dbReference>
<dbReference type="PRO" id="PR:Q9NTM9"/>
<dbReference type="Proteomes" id="UP000005640">
    <property type="component" value="Chromosome 10"/>
</dbReference>
<dbReference type="RNAct" id="Q9NTM9">
    <property type="molecule type" value="protein"/>
</dbReference>
<dbReference type="Bgee" id="ENSG00000119929">
    <property type="expression patterns" value="Expressed in skeletal muscle tissue of rectus abdominis and 190 other cell types or tissues"/>
</dbReference>
<dbReference type="ExpressionAtlas" id="Q9NTM9">
    <property type="expression patterns" value="baseline and differential"/>
</dbReference>
<dbReference type="GO" id="GO:0005737">
    <property type="term" value="C:cytoplasm"/>
    <property type="evidence" value="ECO:0000314"/>
    <property type="project" value="UniProtKB"/>
</dbReference>
<dbReference type="GO" id="GO:0005829">
    <property type="term" value="C:cytosol"/>
    <property type="evidence" value="ECO:0000314"/>
    <property type="project" value="HPA"/>
</dbReference>
<dbReference type="GO" id="GO:0005730">
    <property type="term" value="C:nucleolus"/>
    <property type="evidence" value="ECO:0000314"/>
    <property type="project" value="HPA"/>
</dbReference>
<dbReference type="GO" id="GO:0005654">
    <property type="term" value="C:nucleoplasm"/>
    <property type="evidence" value="ECO:0000314"/>
    <property type="project" value="HPA"/>
</dbReference>
<dbReference type="GO" id="GO:0005634">
    <property type="term" value="C:nucleus"/>
    <property type="evidence" value="ECO:0000314"/>
    <property type="project" value="UniProtKB"/>
</dbReference>
<dbReference type="GO" id="GO:0005507">
    <property type="term" value="F:copper ion binding"/>
    <property type="evidence" value="ECO:0000314"/>
    <property type="project" value="UniProtKB"/>
</dbReference>
<dbReference type="GO" id="GO:0055070">
    <property type="term" value="P:copper ion homeostasis"/>
    <property type="evidence" value="ECO:0000303"/>
    <property type="project" value="UniProtKB"/>
</dbReference>
<dbReference type="GO" id="GO:0006825">
    <property type="term" value="P:copper ion transport"/>
    <property type="evidence" value="ECO:0000303"/>
    <property type="project" value="UniProtKB"/>
</dbReference>
<dbReference type="GO" id="GO:0051262">
    <property type="term" value="P:protein tetramerization"/>
    <property type="evidence" value="ECO:0000353"/>
    <property type="project" value="UniProtKB"/>
</dbReference>
<dbReference type="FunFam" id="3.20.20.380:FF:000002">
    <property type="entry name" value="copper homeostasis protein cutC homolog"/>
    <property type="match status" value="1"/>
</dbReference>
<dbReference type="Gene3D" id="3.20.20.380">
    <property type="entry name" value="Copper homeostasis (CutC) domain"/>
    <property type="match status" value="1"/>
</dbReference>
<dbReference type="HAMAP" id="MF_00795">
    <property type="entry name" value="CutC"/>
    <property type="match status" value="1"/>
</dbReference>
<dbReference type="InterPro" id="IPR005627">
    <property type="entry name" value="CutC-like"/>
</dbReference>
<dbReference type="InterPro" id="IPR036822">
    <property type="entry name" value="CutC-like_dom_sf"/>
</dbReference>
<dbReference type="PANTHER" id="PTHR12598">
    <property type="entry name" value="COPPER HOMEOSTASIS PROTEIN CUTC"/>
    <property type="match status" value="1"/>
</dbReference>
<dbReference type="PANTHER" id="PTHR12598:SF0">
    <property type="entry name" value="COPPER HOMEOSTASIS PROTEIN CUTC HOMOLOG"/>
    <property type="match status" value="1"/>
</dbReference>
<dbReference type="Pfam" id="PF03932">
    <property type="entry name" value="CutC"/>
    <property type="match status" value="1"/>
</dbReference>
<dbReference type="SUPFAM" id="SSF110395">
    <property type="entry name" value="CutC-like"/>
    <property type="match status" value="1"/>
</dbReference>